<dbReference type="EC" id="3.4.21.-"/>
<dbReference type="EMBL" id="AE004439">
    <property type="protein sequence ID" value="AAK03674.1"/>
    <property type="molecule type" value="Genomic_DNA"/>
</dbReference>
<dbReference type="RefSeq" id="WP_010907241.1">
    <property type="nucleotide sequence ID" value="NC_002663.1"/>
</dbReference>
<dbReference type="SMR" id="Q9CKM2"/>
<dbReference type="STRING" id="272843.PM1590"/>
<dbReference type="EnsemblBacteria" id="AAK03674">
    <property type="protein sequence ID" value="AAK03674"/>
    <property type="gene ID" value="PM1590"/>
</dbReference>
<dbReference type="KEGG" id="pmu:PM1590"/>
<dbReference type="PATRIC" id="fig|272843.6.peg.1609"/>
<dbReference type="HOGENOM" id="CLU_090997_0_0_6"/>
<dbReference type="OrthoDB" id="3373764at2"/>
<dbReference type="Proteomes" id="UP000000809">
    <property type="component" value="Chromosome"/>
</dbReference>
<dbReference type="GO" id="GO:0008236">
    <property type="term" value="F:serine-type peptidase activity"/>
    <property type="evidence" value="ECO:0007669"/>
    <property type="project" value="UniProtKB-KW"/>
</dbReference>
<dbReference type="GO" id="GO:0006508">
    <property type="term" value="P:proteolysis"/>
    <property type="evidence" value="ECO:0007669"/>
    <property type="project" value="UniProtKB-KW"/>
</dbReference>
<dbReference type="FunFam" id="3.40.50.880:FF:000094">
    <property type="entry name" value="Uncharacterized peptidase Lmo0363"/>
    <property type="match status" value="1"/>
</dbReference>
<dbReference type="Gene3D" id="3.40.50.880">
    <property type="match status" value="1"/>
</dbReference>
<dbReference type="InterPro" id="IPR029062">
    <property type="entry name" value="Class_I_gatase-like"/>
</dbReference>
<dbReference type="InterPro" id="IPR005320">
    <property type="entry name" value="Peptidase_S51"/>
</dbReference>
<dbReference type="PANTHER" id="PTHR20842:SF0">
    <property type="entry name" value="ALPHA-ASPARTYL DIPEPTIDASE"/>
    <property type="match status" value="1"/>
</dbReference>
<dbReference type="PANTHER" id="PTHR20842">
    <property type="entry name" value="PROTEASE S51 ALPHA-ASPARTYL DIPEPTIDASE"/>
    <property type="match status" value="1"/>
</dbReference>
<dbReference type="Pfam" id="PF03575">
    <property type="entry name" value="Peptidase_S51"/>
    <property type="match status" value="1"/>
</dbReference>
<dbReference type="SUPFAM" id="SSF52317">
    <property type="entry name" value="Class I glutamine amidotransferase-like"/>
    <property type="match status" value="1"/>
</dbReference>
<feature type="chain" id="PRO_0000209970" description="Uncharacterized peptidase PM1590">
    <location>
        <begin position="1"/>
        <end position="207"/>
    </location>
</feature>
<feature type="active site" description="Charge relay system" evidence="1">
    <location>
        <position position="119"/>
    </location>
</feature>
<feature type="active site" description="Charge relay system" evidence="1">
    <location>
        <position position="160"/>
    </location>
</feature>
<reference key="1">
    <citation type="journal article" date="2001" name="Proc. Natl. Acad. Sci. U.S.A.">
        <title>Complete genomic sequence of Pasteurella multocida Pm70.</title>
        <authorList>
            <person name="May B.J."/>
            <person name="Zhang Q."/>
            <person name="Li L.L."/>
            <person name="Paustian M.L."/>
            <person name="Whittam T.S."/>
            <person name="Kapur V."/>
        </authorList>
    </citation>
    <scope>NUCLEOTIDE SEQUENCE [LARGE SCALE GENOMIC DNA]</scope>
    <source>
        <strain>Pm70</strain>
    </source>
</reference>
<evidence type="ECO:0000250" key="1"/>
<evidence type="ECO:0000305" key="2"/>
<organism>
    <name type="scientific">Pasteurella multocida (strain Pm70)</name>
    <dbReference type="NCBI Taxonomy" id="272843"/>
    <lineage>
        <taxon>Bacteria</taxon>
        <taxon>Pseudomonadati</taxon>
        <taxon>Pseudomonadota</taxon>
        <taxon>Gammaproteobacteria</taxon>
        <taxon>Pasteurellales</taxon>
        <taxon>Pasteurellaceae</taxon>
        <taxon>Pasteurella</taxon>
    </lineage>
</organism>
<gene>
    <name type="ordered locus">PM1590</name>
</gene>
<comment type="similarity">
    <text evidence="2">Belongs to the peptidase S51 family.</text>
</comment>
<proteinExistence type="inferred from homology"/>
<protein>
    <recommendedName>
        <fullName>Uncharacterized peptidase PM1590</fullName>
        <ecNumber>3.4.21.-</ecNumber>
    </recommendedName>
</protein>
<sequence>MKKLFLASSFADVFDLFLDFAGNIQNKSITFIPTASKVEEVKFYVDDARNAFLQQGAFIDELDLSTASLAEITDKLAKNEMIYVSGGNTFFLLQELTRTGTAQLIQQHIQAGKMYIGESAGAMISAPNIDYVKYMDSLDQAPMLRDFTALNLVDFYVVPHYTNFPFVEAAQKIIDTYSTTLPLQPIDNHQAILVNNETKIIRGNHKG</sequence>
<accession>Q9CKM2</accession>
<name>Y1590_PASMU</name>
<keyword id="KW-0378">Hydrolase</keyword>
<keyword id="KW-0645">Protease</keyword>
<keyword id="KW-1185">Reference proteome</keyword>
<keyword id="KW-0720">Serine protease</keyword>